<name>Y1578_COXBU</name>
<reference key="1">
    <citation type="journal article" date="2003" name="Proc. Natl. Acad. Sci. U.S.A.">
        <title>Complete genome sequence of the Q-fever pathogen, Coxiella burnetii.</title>
        <authorList>
            <person name="Seshadri R."/>
            <person name="Paulsen I.T."/>
            <person name="Eisen J.A."/>
            <person name="Read T.D."/>
            <person name="Nelson K.E."/>
            <person name="Nelson W.C."/>
            <person name="Ward N.L."/>
            <person name="Tettelin H."/>
            <person name="Davidsen T.M."/>
            <person name="Beanan M.J."/>
            <person name="DeBoy R.T."/>
            <person name="Daugherty S.C."/>
            <person name="Brinkac L.M."/>
            <person name="Madupu R."/>
            <person name="Dodson R.J."/>
            <person name="Khouri H.M."/>
            <person name="Lee K.H."/>
            <person name="Carty H.A."/>
            <person name="Scanlan D."/>
            <person name="Heinzen R.A."/>
            <person name="Thompson H.A."/>
            <person name="Samuel J.E."/>
            <person name="Fraser C.M."/>
            <person name="Heidelberg J.F."/>
        </authorList>
    </citation>
    <scope>NUCLEOTIDE SEQUENCE [LARGE SCALE GENOMIC DNA]</scope>
    <source>
        <strain>RSA 493 / Nine Mile phase I</strain>
    </source>
</reference>
<proteinExistence type="inferred from homology"/>
<feature type="chain" id="PRO_0000200980" description="UPF0761 membrane protein CBU_1578">
    <location>
        <begin position="1"/>
        <end position="278"/>
    </location>
</feature>
<feature type="transmembrane region" description="Helical" evidence="1">
    <location>
        <begin position="38"/>
        <end position="58"/>
    </location>
</feature>
<feature type="transmembrane region" description="Helical" evidence="1">
    <location>
        <begin position="68"/>
        <end position="88"/>
    </location>
</feature>
<feature type="transmembrane region" description="Helical" evidence="1">
    <location>
        <begin position="92"/>
        <end position="112"/>
    </location>
</feature>
<feature type="transmembrane region" description="Helical" evidence="1">
    <location>
        <begin position="134"/>
        <end position="154"/>
    </location>
</feature>
<feature type="transmembrane region" description="Helical" evidence="1">
    <location>
        <begin position="177"/>
        <end position="197"/>
    </location>
</feature>
<feature type="transmembrane region" description="Helical" evidence="1">
    <location>
        <begin position="207"/>
        <end position="227"/>
    </location>
</feature>
<feature type="transmembrane region" description="Helical" evidence="1">
    <location>
        <begin position="244"/>
        <end position="264"/>
    </location>
</feature>
<gene>
    <name type="ordered locus">CBU_1578</name>
</gene>
<dbReference type="EMBL" id="AE016828">
    <property type="protein sequence ID" value="AAO91075.1"/>
    <property type="molecule type" value="Genomic_DNA"/>
</dbReference>
<dbReference type="RefSeq" id="NP_820561.1">
    <property type="nucleotide sequence ID" value="NC_002971.4"/>
</dbReference>
<dbReference type="RefSeq" id="WP_005772112.1">
    <property type="nucleotide sequence ID" value="NZ_CCYB01000016.1"/>
</dbReference>
<dbReference type="STRING" id="227377.CBU_1578"/>
<dbReference type="EnsemblBacteria" id="AAO91075">
    <property type="protein sequence ID" value="AAO91075"/>
    <property type="gene ID" value="CBU_1578"/>
</dbReference>
<dbReference type="GeneID" id="1209488"/>
<dbReference type="KEGG" id="cbu:CBU_1578"/>
<dbReference type="PATRIC" id="fig|227377.7.peg.1579"/>
<dbReference type="eggNOG" id="COG1295">
    <property type="taxonomic scope" value="Bacteria"/>
</dbReference>
<dbReference type="HOGENOM" id="CLU_032288_0_0_6"/>
<dbReference type="OrthoDB" id="9808671at2"/>
<dbReference type="Proteomes" id="UP000002671">
    <property type="component" value="Chromosome"/>
</dbReference>
<dbReference type="GO" id="GO:0005886">
    <property type="term" value="C:plasma membrane"/>
    <property type="evidence" value="ECO:0000318"/>
    <property type="project" value="GO_Central"/>
</dbReference>
<dbReference type="HAMAP" id="MF_00672">
    <property type="entry name" value="UPF0761"/>
    <property type="match status" value="1"/>
</dbReference>
<dbReference type="InterPro" id="IPR023679">
    <property type="entry name" value="UPF0761_bac"/>
</dbReference>
<dbReference type="InterPro" id="IPR017039">
    <property type="entry name" value="Virul_fac_BrkB"/>
</dbReference>
<dbReference type="NCBIfam" id="TIGR00765">
    <property type="entry name" value="yihY_not_rbn"/>
    <property type="match status" value="1"/>
</dbReference>
<dbReference type="PANTHER" id="PTHR30213">
    <property type="entry name" value="INNER MEMBRANE PROTEIN YHJD"/>
    <property type="match status" value="1"/>
</dbReference>
<dbReference type="PANTHER" id="PTHR30213:SF0">
    <property type="entry name" value="UPF0761 MEMBRANE PROTEIN YIHY"/>
    <property type="match status" value="1"/>
</dbReference>
<dbReference type="Pfam" id="PF03631">
    <property type="entry name" value="Virul_fac_BrkB"/>
    <property type="match status" value="1"/>
</dbReference>
<dbReference type="PIRSF" id="PIRSF035875">
    <property type="entry name" value="RNase_BN"/>
    <property type="match status" value="1"/>
</dbReference>
<protein>
    <recommendedName>
        <fullName evidence="1">UPF0761 membrane protein CBU_1578</fullName>
    </recommendedName>
</protein>
<evidence type="ECO:0000255" key="1">
    <source>
        <dbReference type="HAMAP-Rule" id="MF_00672"/>
    </source>
</evidence>
<comment type="subcellular location">
    <subcellularLocation>
        <location evidence="1">Cell inner membrane</location>
        <topology evidence="1">Multi-pass membrane protein</topology>
    </subcellularLocation>
</comment>
<comment type="similarity">
    <text evidence="1">Belongs to the UPF0761 family.</text>
</comment>
<organism>
    <name type="scientific">Coxiella burnetii (strain RSA 493 / Nine Mile phase I)</name>
    <dbReference type="NCBI Taxonomy" id="227377"/>
    <lineage>
        <taxon>Bacteria</taxon>
        <taxon>Pseudomonadati</taxon>
        <taxon>Pseudomonadota</taxon>
        <taxon>Gammaproteobacteria</taxon>
        <taxon>Legionellales</taxon>
        <taxon>Coxiellaceae</taxon>
        <taxon>Coxiella</taxon>
    </lineage>
</organism>
<keyword id="KW-0997">Cell inner membrane</keyword>
<keyword id="KW-1003">Cell membrane</keyword>
<keyword id="KW-0472">Membrane</keyword>
<keyword id="KW-1185">Reference proteome</keyword>
<keyword id="KW-0812">Transmembrane</keyword>
<keyword id="KW-1133">Transmembrane helix</keyword>
<sequence length="278" mass="31422">MTIYRFFKRSAFTLAYIYRRFHEEGCAYRATALAYTTLLALVPLTIVAFTLLSFVPAFQGVGVRLQNLIWENFVPTSAGMVAAYLSQLTQNVTGLSIINIFFLGIVALLLMYNINRAFVAIWHTEHHFRLSLHFLIYFMVLLLSPFLLGAVMLLGTFLVQSPLVTDLIGWPYLGKGLLFVLPYVLIFITFTLFNWVLPSAKVKLSHAVIGGLVTTVLFELAKFAFTVYLKFFPTYRVIYGALSVIPIFLVWLYVSWTIILLGAVVSNVIACGIPEKYK</sequence>
<accession>Q83BD3</accession>